<evidence type="ECO:0000255" key="1">
    <source>
        <dbReference type="HAMAP-Rule" id="MF_00227"/>
    </source>
</evidence>
<evidence type="ECO:0000305" key="2"/>
<reference key="1">
    <citation type="journal article" date="2009" name="Infect. Immun.">
        <title>Comparative genomics reveal extensive transposon-mediated genomic plasticity and diversity among potential effector proteins within the genus Coxiella.</title>
        <authorList>
            <person name="Beare P.A."/>
            <person name="Unsworth N."/>
            <person name="Andoh M."/>
            <person name="Voth D.E."/>
            <person name="Omsland A."/>
            <person name="Gilk S.D."/>
            <person name="Williams K.P."/>
            <person name="Sobral B.W."/>
            <person name="Kupko J.J. III"/>
            <person name="Porcella S.F."/>
            <person name="Samuel J.E."/>
            <person name="Heinzen R.A."/>
        </authorList>
    </citation>
    <scope>NUCLEOTIDE SEQUENCE [LARGE SCALE GENOMIC DNA]</scope>
    <source>
        <strain>Dugway 5J108-111</strain>
    </source>
</reference>
<accession>A9KBT3</accession>
<sequence length="121" mass="14456">MEKGFSVGWRIRTTAEFRRIYAARQRIIGRYYLLYYRENEIKHSRLGVVASKRNVRKAVWRNRVRRVVKETFRIRKKDLPAFDIVVVAKASSVEADNKELYECINKLFTQLERQSKRSSSV</sequence>
<protein>
    <recommendedName>
        <fullName evidence="1">Ribonuclease P protein component</fullName>
        <shortName evidence="1">RNase P protein</shortName>
        <shortName evidence="1">RNaseP protein</shortName>
        <ecNumber evidence="1">3.1.26.5</ecNumber>
    </recommendedName>
    <alternativeName>
        <fullName evidence="1">Protein C5</fullName>
    </alternativeName>
</protein>
<proteinExistence type="inferred from homology"/>
<name>RNPA_COXBN</name>
<comment type="function">
    <text evidence="1">RNaseP catalyzes the removal of the 5'-leader sequence from pre-tRNA to produce the mature 5'-terminus. It can also cleave other RNA substrates such as 4.5S RNA. The protein component plays an auxiliary but essential role in vivo by binding to the 5'-leader sequence and broadening the substrate specificity of the ribozyme.</text>
</comment>
<comment type="catalytic activity">
    <reaction evidence="1">
        <text>Endonucleolytic cleavage of RNA, removing 5'-extranucleotides from tRNA precursor.</text>
        <dbReference type="EC" id="3.1.26.5"/>
    </reaction>
</comment>
<comment type="subunit">
    <text evidence="1">Consists of a catalytic RNA component (M1 or rnpB) and a protein subunit.</text>
</comment>
<comment type="similarity">
    <text evidence="1">Belongs to the RnpA family.</text>
</comment>
<comment type="sequence caution" evidence="2">
    <conflict type="erroneous initiation">
        <sequence resource="EMBL-CDS" id="ABS77389"/>
    </conflict>
</comment>
<keyword id="KW-0255">Endonuclease</keyword>
<keyword id="KW-0378">Hydrolase</keyword>
<keyword id="KW-0540">Nuclease</keyword>
<keyword id="KW-0694">RNA-binding</keyword>
<keyword id="KW-0819">tRNA processing</keyword>
<feature type="chain" id="PRO_1000078195" description="Ribonuclease P protein component">
    <location>
        <begin position="1"/>
        <end position="121"/>
    </location>
</feature>
<organism>
    <name type="scientific">Coxiella burnetii (strain Dugway 5J108-111)</name>
    <dbReference type="NCBI Taxonomy" id="434922"/>
    <lineage>
        <taxon>Bacteria</taxon>
        <taxon>Pseudomonadati</taxon>
        <taxon>Pseudomonadota</taxon>
        <taxon>Gammaproteobacteria</taxon>
        <taxon>Legionellales</taxon>
        <taxon>Coxiellaceae</taxon>
        <taxon>Coxiella</taxon>
    </lineage>
</organism>
<gene>
    <name evidence="1" type="primary">rnpA</name>
    <name type="ordered locus">CBUD_0203</name>
</gene>
<dbReference type="EC" id="3.1.26.5" evidence="1"/>
<dbReference type="EMBL" id="CP000733">
    <property type="protein sequence ID" value="ABS77389.2"/>
    <property type="status" value="ALT_INIT"/>
    <property type="molecule type" value="Genomic_DNA"/>
</dbReference>
<dbReference type="SMR" id="A9KBT3"/>
<dbReference type="KEGG" id="cbd:CBUD_0203"/>
<dbReference type="HOGENOM" id="CLU_117179_11_0_6"/>
<dbReference type="Proteomes" id="UP000008555">
    <property type="component" value="Chromosome"/>
</dbReference>
<dbReference type="GO" id="GO:0030677">
    <property type="term" value="C:ribonuclease P complex"/>
    <property type="evidence" value="ECO:0007669"/>
    <property type="project" value="TreeGrafter"/>
</dbReference>
<dbReference type="GO" id="GO:0042781">
    <property type="term" value="F:3'-tRNA processing endoribonuclease activity"/>
    <property type="evidence" value="ECO:0007669"/>
    <property type="project" value="TreeGrafter"/>
</dbReference>
<dbReference type="GO" id="GO:0004526">
    <property type="term" value="F:ribonuclease P activity"/>
    <property type="evidence" value="ECO:0007669"/>
    <property type="project" value="UniProtKB-UniRule"/>
</dbReference>
<dbReference type="GO" id="GO:0000049">
    <property type="term" value="F:tRNA binding"/>
    <property type="evidence" value="ECO:0007669"/>
    <property type="project" value="UniProtKB-UniRule"/>
</dbReference>
<dbReference type="GO" id="GO:0001682">
    <property type="term" value="P:tRNA 5'-leader removal"/>
    <property type="evidence" value="ECO:0007669"/>
    <property type="project" value="UniProtKB-UniRule"/>
</dbReference>
<dbReference type="Gene3D" id="3.30.230.10">
    <property type="match status" value="1"/>
</dbReference>
<dbReference type="HAMAP" id="MF_00227">
    <property type="entry name" value="RNase_P"/>
    <property type="match status" value="1"/>
</dbReference>
<dbReference type="InterPro" id="IPR020568">
    <property type="entry name" value="Ribosomal_Su5_D2-typ_SF"/>
</dbReference>
<dbReference type="InterPro" id="IPR014721">
    <property type="entry name" value="Ribsml_uS5_D2-typ_fold_subgr"/>
</dbReference>
<dbReference type="InterPro" id="IPR000100">
    <property type="entry name" value="RNase_P"/>
</dbReference>
<dbReference type="InterPro" id="IPR020539">
    <property type="entry name" value="RNase_P_CS"/>
</dbReference>
<dbReference type="NCBIfam" id="TIGR00188">
    <property type="entry name" value="rnpA"/>
    <property type="match status" value="1"/>
</dbReference>
<dbReference type="PANTHER" id="PTHR33992">
    <property type="entry name" value="RIBONUCLEASE P PROTEIN COMPONENT"/>
    <property type="match status" value="1"/>
</dbReference>
<dbReference type="PANTHER" id="PTHR33992:SF1">
    <property type="entry name" value="RIBONUCLEASE P PROTEIN COMPONENT"/>
    <property type="match status" value="1"/>
</dbReference>
<dbReference type="Pfam" id="PF00825">
    <property type="entry name" value="Ribonuclease_P"/>
    <property type="match status" value="1"/>
</dbReference>
<dbReference type="SUPFAM" id="SSF54211">
    <property type="entry name" value="Ribosomal protein S5 domain 2-like"/>
    <property type="match status" value="1"/>
</dbReference>
<dbReference type="PROSITE" id="PS00648">
    <property type="entry name" value="RIBONUCLEASE_P"/>
    <property type="match status" value="1"/>
</dbReference>